<reference key="1">
    <citation type="journal article" date="2010" name="Environ. Microbiol.">
        <title>The genome of Syntrophomonas wolfei: new insights into syntrophic metabolism and biohydrogen production.</title>
        <authorList>
            <person name="Sieber J.R."/>
            <person name="Sims D.R."/>
            <person name="Han C."/>
            <person name="Kim E."/>
            <person name="Lykidis A."/>
            <person name="Lapidus A.L."/>
            <person name="McDonnald E."/>
            <person name="Rohlin L."/>
            <person name="Culley D.E."/>
            <person name="Gunsalus R."/>
            <person name="McInerney M.J."/>
        </authorList>
    </citation>
    <scope>NUCLEOTIDE SEQUENCE [LARGE SCALE GENOMIC DNA]</scope>
    <source>
        <strain>DSM 2245B / Goettingen</strain>
    </source>
</reference>
<name>RS9_SYNWW</name>
<feature type="chain" id="PRO_1000051357" description="Small ribosomal subunit protein uS9">
    <location>
        <begin position="1"/>
        <end position="130"/>
    </location>
</feature>
<feature type="region of interest" description="Disordered" evidence="2">
    <location>
        <begin position="105"/>
        <end position="130"/>
    </location>
</feature>
<feature type="compositionally biased region" description="Basic residues" evidence="2">
    <location>
        <begin position="111"/>
        <end position="130"/>
    </location>
</feature>
<proteinExistence type="inferred from homology"/>
<dbReference type="EMBL" id="CP000448">
    <property type="protein sequence ID" value="ABI69588.1"/>
    <property type="molecule type" value="Genomic_DNA"/>
</dbReference>
<dbReference type="RefSeq" id="WP_011641672.1">
    <property type="nucleotide sequence ID" value="NC_008346.1"/>
</dbReference>
<dbReference type="SMR" id="Q0AUL6"/>
<dbReference type="STRING" id="335541.Swol_2297"/>
<dbReference type="KEGG" id="swo:Swol_2297"/>
<dbReference type="eggNOG" id="COG0103">
    <property type="taxonomic scope" value="Bacteria"/>
</dbReference>
<dbReference type="HOGENOM" id="CLU_046483_2_1_9"/>
<dbReference type="OrthoDB" id="9803965at2"/>
<dbReference type="Proteomes" id="UP000001968">
    <property type="component" value="Chromosome"/>
</dbReference>
<dbReference type="GO" id="GO:0022627">
    <property type="term" value="C:cytosolic small ribosomal subunit"/>
    <property type="evidence" value="ECO:0007669"/>
    <property type="project" value="TreeGrafter"/>
</dbReference>
<dbReference type="GO" id="GO:0003723">
    <property type="term" value="F:RNA binding"/>
    <property type="evidence" value="ECO:0007669"/>
    <property type="project" value="TreeGrafter"/>
</dbReference>
<dbReference type="GO" id="GO:0003735">
    <property type="term" value="F:structural constituent of ribosome"/>
    <property type="evidence" value="ECO:0007669"/>
    <property type="project" value="InterPro"/>
</dbReference>
<dbReference type="GO" id="GO:0006412">
    <property type="term" value="P:translation"/>
    <property type="evidence" value="ECO:0007669"/>
    <property type="project" value="UniProtKB-UniRule"/>
</dbReference>
<dbReference type="FunFam" id="3.30.230.10:FF:000001">
    <property type="entry name" value="30S ribosomal protein S9"/>
    <property type="match status" value="1"/>
</dbReference>
<dbReference type="Gene3D" id="3.30.230.10">
    <property type="match status" value="1"/>
</dbReference>
<dbReference type="HAMAP" id="MF_00532_B">
    <property type="entry name" value="Ribosomal_uS9_B"/>
    <property type="match status" value="1"/>
</dbReference>
<dbReference type="InterPro" id="IPR020568">
    <property type="entry name" value="Ribosomal_Su5_D2-typ_SF"/>
</dbReference>
<dbReference type="InterPro" id="IPR000754">
    <property type="entry name" value="Ribosomal_uS9"/>
</dbReference>
<dbReference type="InterPro" id="IPR023035">
    <property type="entry name" value="Ribosomal_uS9_bac/plastid"/>
</dbReference>
<dbReference type="InterPro" id="IPR020574">
    <property type="entry name" value="Ribosomal_uS9_CS"/>
</dbReference>
<dbReference type="InterPro" id="IPR014721">
    <property type="entry name" value="Ribsml_uS5_D2-typ_fold_subgr"/>
</dbReference>
<dbReference type="NCBIfam" id="NF001099">
    <property type="entry name" value="PRK00132.1"/>
    <property type="match status" value="1"/>
</dbReference>
<dbReference type="PANTHER" id="PTHR21569">
    <property type="entry name" value="RIBOSOMAL PROTEIN S9"/>
    <property type="match status" value="1"/>
</dbReference>
<dbReference type="PANTHER" id="PTHR21569:SF1">
    <property type="entry name" value="SMALL RIBOSOMAL SUBUNIT PROTEIN US9M"/>
    <property type="match status" value="1"/>
</dbReference>
<dbReference type="Pfam" id="PF00380">
    <property type="entry name" value="Ribosomal_S9"/>
    <property type="match status" value="1"/>
</dbReference>
<dbReference type="SUPFAM" id="SSF54211">
    <property type="entry name" value="Ribosomal protein S5 domain 2-like"/>
    <property type="match status" value="1"/>
</dbReference>
<dbReference type="PROSITE" id="PS00360">
    <property type="entry name" value="RIBOSOMAL_S9"/>
    <property type="match status" value="1"/>
</dbReference>
<accession>Q0AUL6</accession>
<comment type="similarity">
    <text evidence="1">Belongs to the universal ribosomal protein uS9 family.</text>
</comment>
<sequence>MAKVQYWGTGRRKEAVARVRLVPGEGNIIINNRSFEDFFPNQTSRLIVQQPLVLTAMQGRFDIICRVNGGGVSGQAGAIQLGIARALLKANPDIKAMLRRSGFLTRDPRMKERKKYGLHKARKAPQYSKR</sequence>
<keyword id="KW-1185">Reference proteome</keyword>
<keyword id="KW-0687">Ribonucleoprotein</keyword>
<keyword id="KW-0689">Ribosomal protein</keyword>
<evidence type="ECO:0000255" key="1">
    <source>
        <dbReference type="HAMAP-Rule" id="MF_00532"/>
    </source>
</evidence>
<evidence type="ECO:0000256" key="2">
    <source>
        <dbReference type="SAM" id="MobiDB-lite"/>
    </source>
</evidence>
<evidence type="ECO:0000305" key="3"/>
<protein>
    <recommendedName>
        <fullName evidence="1">Small ribosomal subunit protein uS9</fullName>
    </recommendedName>
    <alternativeName>
        <fullName evidence="3">30S ribosomal protein S9</fullName>
    </alternativeName>
</protein>
<gene>
    <name evidence="1" type="primary">rpsI</name>
    <name type="ordered locus">Swol_2297</name>
</gene>
<organism>
    <name type="scientific">Syntrophomonas wolfei subsp. wolfei (strain DSM 2245B / Goettingen)</name>
    <dbReference type="NCBI Taxonomy" id="335541"/>
    <lineage>
        <taxon>Bacteria</taxon>
        <taxon>Bacillati</taxon>
        <taxon>Bacillota</taxon>
        <taxon>Clostridia</taxon>
        <taxon>Eubacteriales</taxon>
        <taxon>Syntrophomonadaceae</taxon>
        <taxon>Syntrophomonas</taxon>
    </lineage>
</organism>